<proteinExistence type="evidence at protein level"/>
<protein>
    <recommendedName>
        <fullName>Ras-specific guanine nucleotide-releasing factor 1</fullName>
        <shortName>Ras-GRF1</shortName>
    </recommendedName>
    <alternativeName>
        <fullName>Guanine nucleotide-releasing protein</fullName>
        <shortName>GNRP</shortName>
    </alternativeName>
    <alternativeName>
        <fullName>P140 Ras-GRF</fullName>
    </alternativeName>
</protein>
<reference key="1">
    <citation type="journal article" date="1992" name="Nature">
        <title>Molecular cloning of cDNAs encoding a guanine-nucleotide-releasing factor for Ras p21.</title>
        <authorList>
            <person name="Shou C."/>
            <person name="Farusworth C.L."/>
            <person name="Neel B.G."/>
            <person name="Feig L.A."/>
        </authorList>
    </citation>
    <scope>NUCLEOTIDE SEQUENCE [MRNA]</scope>
    <source>
        <tissue>Brain</tissue>
    </source>
</reference>
<reference key="2">
    <citation type="journal article" date="1999" name="Mol. Cell. Biol.">
        <title>Ras-specific exchange factor GRF: oligomerization through its Dbl homology domain and calcium-dependent activation of Raf.</title>
        <authorList>
            <person name="Anborgh P.H."/>
            <person name="Qian X."/>
            <person name="Papageorge A.G."/>
            <person name="Vass W.C."/>
            <person name="DeClue J.E."/>
            <person name="Lowy D.R."/>
        </authorList>
    </citation>
    <scope>FUNCTION</scope>
    <scope>OLIGOMERIZATION</scope>
    <scope>INTERACTION WITH RASGRF2</scope>
</reference>
<reference key="3">
    <citation type="journal article" date="2011" name="Neuron">
        <title>Requirement for Plk2 in orchestrated ras and rap signaling, homeostatic structural plasticity, and memory.</title>
        <authorList>
            <person name="Lee K.J."/>
            <person name="Lee Y."/>
            <person name="Rozeboom A."/>
            <person name="Lee J.Y."/>
            <person name="Udagawa N."/>
            <person name="Hoe H.S."/>
            <person name="Pak D.T."/>
        </authorList>
    </citation>
    <scope>PHOSPHORYLATION AT SER-71; SER-575; SER-611; SER-760; SER-781 AND SER-854</scope>
    <scope>UBIQUITINATION</scope>
    <scope>MUTAGENESIS OF SER-71 AND SER-575</scope>
</reference>
<accession>P28818</accession>
<sequence length="1244" mass="142667">MQKAIRLNDGHVVSLGLLAQRDGTRKGYLSKRSSDNPKWQTKWFALLQNLLFYFESDSSSRPSGLYLLEGSICKRMPSPKRGTSSKESDKQHHYFTVNFSNDSQKSLELRTDDSKDCDEWVAAIARASYKILATEHEALMQKYLHLLQVVETEKTVAKQLRQQLEDGEVEIERLKAEIANLIKDNERIQSNQLVAPEDEDSDIKKIKKVQSFLRGWLCRRKWKNIIQDYIRSPHADSMRKRNQVVFSMLEAEAEYVQQLHILVNNFLRPLRMAASSKKPPITHDDVSSIFLNSETIMFLHQIFYQGLKARIASWPTLVLADLFDILLPMLNIYQEFVRNHQYSLQILAHCKQNRDFDKLLKQYEAKPDCEERTLETFLTYPMFQIPRYILTLHELLAHTPHEHVERNSLDYAKSKLEELSRVMHDEVSETENIRKNLAIERMITEGCEILLDTSQTFVRQGSLIQVPMSEKGKINKGRLGSLSLKKEGERQCFLFSKHLIICTRGSGSKLHLTKNGVISLIDCTLLDDPENMDDDGKGQEVDHLDFKIWVEPKDSPPFTVILVASSRQEKAAWTSDIIQCVDNIRCNGLMMNAFEENSKVTVPQMIKSDASLYCDDVDIRFSKTMNSCKVLQIRYASVERLLERLTDLRFLSIDFLNTFLHSYRVFTDAVVVLDKLISIYKKPITAIPARSLELLFSSSHNTKLLYGDAPKSPRASRKFSSPPPLAIGTSSPVRRRKLSLNIPIITGGKALELASLGCPSDGYTNIHSPISPFGKTTLDTSKLCVASSLTRTPEEIDMTTLEESSGFRKPTSDILKEESDDDQSDVDDTEVSPPTPKSFRNRITQEFPLFNYNSGIMMTCRDLMDSNRSPLSATSAFAIATAGANESPANKEIYRRMSLANTGYSSDQRNIDKEFVIRRAATNRVLNVLRHWVTKHSQDFETDDLLKYKVICFLEEVMHDPDLLPQERKAAANIMRTLTQEEITENHSMLDELLLMTEGVKTEPFENHSAMEIAEQLTLLDHLVFKSIPYEEFFGQGWMKADKNERTPYIMKTTRHFNHISNLIASEILRNEEVSARASTIEKWVAVADICRCLHNYNAVLEITSSINRSAIFRLKKTWLKVSKQTKSLFDKLQKLVSSDGRFKNLRETLRNCDPPCVPYLGMYLTDLAFLEEGTPNYTEDGLVNFSKMRMISHIIREIRQFQQTTYKIEPQPKVTQYLVDETFVLDDESLYEASLRIEPKLPT</sequence>
<feature type="chain" id="PRO_0000068882" description="Ras-specific guanine nucleotide-releasing factor 1">
    <location>
        <begin position="1"/>
        <end position="1244"/>
    </location>
</feature>
<feature type="domain" description="PH 1" evidence="6">
    <location>
        <begin position="22"/>
        <end position="129"/>
    </location>
</feature>
<feature type="domain" description="IQ" evidence="4">
    <location>
        <begin position="204"/>
        <end position="229"/>
    </location>
</feature>
<feature type="domain" description="DH" evidence="3">
    <location>
        <begin position="240"/>
        <end position="426"/>
    </location>
</feature>
<feature type="domain" description="PH 2" evidence="6">
    <location>
        <begin position="456"/>
        <end position="582"/>
    </location>
</feature>
<feature type="domain" description="N-terminal Ras-GEF" evidence="5">
    <location>
        <begin position="629"/>
        <end position="743"/>
    </location>
</feature>
<feature type="domain" description="Ras-GEF" evidence="7">
    <location>
        <begin position="1009"/>
        <end position="1241"/>
    </location>
</feature>
<feature type="region of interest" description="Disordered" evidence="8">
    <location>
        <begin position="707"/>
        <end position="730"/>
    </location>
</feature>
<feature type="region of interest" description="Disordered" evidence="8">
    <location>
        <begin position="800"/>
        <end position="840"/>
    </location>
</feature>
<feature type="compositionally biased region" description="Acidic residues" evidence="8">
    <location>
        <begin position="818"/>
        <end position="830"/>
    </location>
</feature>
<feature type="modified residue" description="Phosphoserine; by PLK2" evidence="10">
    <location>
        <position position="71"/>
    </location>
</feature>
<feature type="modified residue" description="Phosphoserine; by PLK2" evidence="10">
    <location>
        <position position="575"/>
    </location>
</feature>
<feature type="modified residue" description="Phosphoserine; by PLK2" evidence="10">
    <location>
        <position position="611"/>
    </location>
</feature>
<feature type="modified residue" description="Phosphoserine" evidence="2">
    <location>
        <position position="739"/>
    </location>
</feature>
<feature type="modified residue" description="Phosphoserine; by PLK2" evidence="10">
    <location>
        <position position="760"/>
    </location>
</feature>
<feature type="modified residue" description="Phosphoserine; by PLK2" evidence="10">
    <location>
        <position position="781"/>
    </location>
</feature>
<feature type="modified residue" description="Phosphoserine; by PLK2" evidence="10">
    <location>
        <position position="854"/>
    </location>
</feature>
<feature type="mutagenesis site" description="Abolishes degradation by the proteasome." evidence="10">
    <original>S</original>
    <variation>A</variation>
    <location>
        <position position="71"/>
    </location>
</feature>
<feature type="mutagenesis site" description="Abolishes degradation by the proteasome." evidence="10">
    <original>S</original>
    <variation>A</variation>
    <location>
        <position position="575"/>
    </location>
</feature>
<dbReference type="EMBL" id="X67241">
    <property type="protein sequence ID" value="CAA47666.1"/>
    <property type="molecule type" value="mRNA"/>
</dbReference>
<dbReference type="PIR" id="S29083">
    <property type="entry name" value="S29083"/>
</dbReference>
<dbReference type="RefSeq" id="NP_001164002.1">
    <property type="nucleotide sequence ID" value="NM_001170531.1"/>
</dbReference>
<dbReference type="SMR" id="P28818"/>
<dbReference type="BioGRID" id="251354">
    <property type="interactions" value="2"/>
</dbReference>
<dbReference type="FunCoup" id="P28818">
    <property type="interactions" value="1972"/>
</dbReference>
<dbReference type="STRING" id="10116.ENSRNOP00000070883"/>
<dbReference type="iPTMnet" id="P28818"/>
<dbReference type="PhosphoSitePlus" id="P28818"/>
<dbReference type="PaxDb" id="10116-ENSRNOP00000018794"/>
<dbReference type="GeneID" id="192213"/>
<dbReference type="KEGG" id="rno:192213"/>
<dbReference type="UCSC" id="RGD:620395">
    <property type="organism name" value="rat"/>
</dbReference>
<dbReference type="AGR" id="RGD:620395"/>
<dbReference type="CTD" id="5923"/>
<dbReference type="RGD" id="620395">
    <property type="gene designation" value="Rasgrf1"/>
</dbReference>
<dbReference type="eggNOG" id="KOG3417">
    <property type="taxonomic scope" value="Eukaryota"/>
</dbReference>
<dbReference type="InParanoid" id="P28818"/>
<dbReference type="OrthoDB" id="39819at9989"/>
<dbReference type="PhylomeDB" id="P28818"/>
<dbReference type="Reactome" id="R-RNO-5673001">
    <property type="pathway name" value="RAF/MAP kinase cascade"/>
</dbReference>
<dbReference type="PRO" id="PR:P28818"/>
<dbReference type="Proteomes" id="UP000002494">
    <property type="component" value="Unplaced"/>
</dbReference>
<dbReference type="GO" id="GO:0097440">
    <property type="term" value="C:apical dendrite"/>
    <property type="evidence" value="ECO:0000314"/>
    <property type="project" value="RGD"/>
</dbReference>
<dbReference type="GO" id="GO:0016327">
    <property type="term" value="C:apicolateral plasma membrane"/>
    <property type="evidence" value="ECO:0000314"/>
    <property type="project" value="RGD"/>
</dbReference>
<dbReference type="GO" id="GO:0016323">
    <property type="term" value="C:basolateral plasma membrane"/>
    <property type="evidence" value="ECO:0000314"/>
    <property type="project" value="RGD"/>
</dbReference>
<dbReference type="GO" id="GO:0005829">
    <property type="term" value="C:cytosol"/>
    <property type="evidence" value="ECO:0000250"/>
    <property type="project" value="HGNC-UCL"/>
</dbReference>
<dbReference type="GO" id="GO:0098978">
    <property type="term" value="C:glutamatergic synapse"/>
    <property type="evidence" value="ECO:0000314"/>
    <property type="project" value="SynGO"/>
</dbReference>
<dbReference type="GO" id="GO:0030426">
    <property type="term" value="C:growth cone"/>
    <property type="evidence" value="ECO:0000250"/>
    <property type="project" value="HGNC-UCL"/>
</dbReference>
<dbReference type="GO" id="GO:0043025">
    <property type="term" value="C:neuronal cell body"/>
    <property type="evidence" value="ECO:0000314"/>
    <property type="project" value="RGD"/>
</dbReference>
<dbReference type="GO" id="GO:0005886">
    <property type="term" value="C:plasma membrane"/>
    <property type="evidence" value="ECO:0000318"/>
    <property type="project" value="GO_Central"/>
</dbReference>
<dbReference type="GO" id="GO:0098794">
    <property type="term" value="C:postsynapse"/>
    <property type="evidence" value="ECO:0000314"/>
    <property type="project" value="SynGO"/>
</dbReference>
<dbReference type="GO" id="GO:0035254">
    <property type="term" value="F:glutamate receptor binding"/>
    <property type="evidence" value="ECO:0000266"/>
    <property type="project" value="RGD"/>
</dbReference>
<dbReference type="GO" id="GO:0005096">
    <property type="term" value="F:GTPase activator activity"/>
    <property type="evidence" value="ECO:0000304"/>
    <property type="project" value="UniProtKB"/>
</dbReference>
<dbReference type="GO" id="GO:0005085">
    <property type="term" value="F:guanyl-nucleotide exchange factor activity"/>
    <property type="evidence" value="ECO:0000266"/>
    <property type="project" value="RGD"/>
</dbReference>
<dbReference type="GO" id="GO:0030971">
    <property type="term" value="F:receptor tyrosine kinase binding"/>
    <property type="evidence" value="ECO:0000353"/>
    <property type="project" value="RGD"/>
</dbReference>
<dbReference type="GO" id="GO:0031267">
    <property type="term" value="F:small GTPase binding"/>
    <property type="evidence" value="ECO:0000314"/>
    <property type="project" value="RGD"/>
</dbReference>
<dbReference type="GO" id="GO:0071236">
    <property type="term" value="P:cellular response to antibiotic"/>
    <property type="evidence" value="ECO:0000270"/>
    <property type="project" value="RGD"/>
</dbReference>
<dbReference type="GO" id="GO:0032869">
    <property type="term" value="P:cellular response to insulin stimulus"/>
    <property type="evidence" value="ECO:0000270"/>
    <property type="project" value="RGD"/>
</dbReference>
<dbReference type="GO" id="GO:0043409">
    <property type="term" value="P:negative regulation of MAPK cascade"/>
    <property type="evidence" value="ECO:0000250"/>
    <property type="project" value="HGNC-UCL"/>
</dbReference>
<dbReference type="GO" id="GO:0031175">
    <property type="term" value="P:neuron projection development"/>
    <property type="evidence" value="ECO:0000250"/>
    <property type="project" value="HGNC-UCL"/>
</dbReference>
<dbReference type="GO" id="GO:0048146">
    <property type="term" value="P:positive regulation of fibroblast proliferation"/>
    <property type="evidence" value="ECO:0000315"/>
    <property type="project" value="RGD"/>
</dbReference>
<dbReference type="GO" id="GO:0043410">
    <property type="term" value="P:positive regulation of MAPK cascade"/>
    <property type="evidence" value="ECO:0000250"/>
    <property type="project" value="HGNC-UCL"/>
</dbReference>
<dbReference type="GO" id="GO:0035022">
    <property type="term" value="P:positive regulation of Rac protein signal transduction"/>
    <property type="evidence" value="ECO:0000250"/>
    <property type="project" value="HGNC-UCL"/>
</dbReference>
<dbReference type="GO" id="GO:0046579">
    <property type="term" value="P:positive regulation of Ras protein signal transduction"/>
    <property type="evidence" value="ECO:0000314"/>
    <property type="project" value="UniProtKB"/>
</dbReference>
<dbReference type="GO" id="GO:0099170">
    <property type="term" value="P:postsynaptic modulation of chemical synaptic transmission"/>
    <property type="evidence" value="ECO:0000314"/>
    <property type="project" value="SynGO"/>
</dbReference>
<dbReference type="GO" id="GO:0007265">
    <property type="term" value="P:Ras protein signal transduction"/>
    <property type="evidence" value="ECO:0000318"/>
    <property type="project" value="GO_Central"/>
</dbReference>
<dbReference type="GO" id="GO:0048168">
    <property type="term" value="P:regulation of neuronal synaptic plasticity"/>
    <property type="evidence" value="ECO:0000266"/>
    <property type="project" value="RGD"/>
</dbReference>
<dbReference type="GO" id="GO:0035020">
    <property type="term" value="P:regulation of Rac protein signal transduction"/>
    <property type="evidence" value="ECO:0000266"/>
    <property type="project" value="RGD"/>
</dbReference>
<dbReference type="GO" id="GO:0046578">
    <property type="term" value="P:regulation of Ras protein signal transduction"/>
    <property type="evidence" value="ECO:0000250"/>
    <property type="project" value="HGNC-UCL"/>
</dbReference>
<dbReference type="GO" id="GO:0048167">
    <property type="term" value="P:regulation of synaptic plasticity"/>
    <property type="evidence" value="ECO:0000314"/>
    <property type="project" value="UniProtKB"/>
</dbReference>
<dbReference type="GO" id="GO:0001975">
    <property type="term" value="P:response to amphetamine"/>
    <property type="evidence" value="ECO:0000270"/>
    <property type="project" value="RGD"/>
</dbReference>
<dbReference type="GO" id="GO:0034976">
    <property type="term" value="P:response to endoplasmic reticulum stress"/>
    <property type="evidence" value="ECO:0000266"/>
    <property type="project" value="RGD"/>
</dbReference>
<dbReference type="GO" id="GO:0044342">
    <property type="term" value="P:type B pancreatic cell proliferation"/>
    <property type="evidence" value="ECO:0000266"/>
    <property type="project" value="RGD"/>
</dbReference>
<dbReference type="CDD" id="cd00155">
    <property type="entry name" value="RasGEF"/>
    <property type="match status" value="1"/>
</dbReference>
<dbReference type="CDD" id="cd00160">
    <property type="entry name" value="RhoGEF"/>
    <property type="match status" value="1"/>
</dbReference>
<dbReference type="FunFam" id="1.20.870.10:FF:000004">
    <property type="entry name" value="Ras-specific guanine nucleotide-releasing factor 1 isoform 2"/>
    <property type="match status" value="1"/>
</dbReference>
<dbReference type="FunFam" id="1.20.900.10:FF:000005">
    <property type="entry name" value="Ras-specific guanine nucleotide-releasing factor 1 isoform 2"/>
    <property type="match status" value="1"/>
</dbReference>
<dbReference type="FunFam" id="1.20.870.10:FF:000006">
    <property type="entry name" value="ras-specific guanine nucleotide-releasing factor 1 isoform X1"/>
    <property type="match status" value="1"/>
</dbReference>
<dbReference type="FunFam" id="2.30.29.30:FF:000117">
    <property type="entry name" value="ras-specific guanine nucleotide-releasing factor 1 isoform X2"/>
    <property type="match status" value="1"/>
</dbReference>
<dbReference type="FunFam" id="2.30.29.30:FF:000176">
    <property type="entry name" value="ras-specific guanine nucleotide-releasing factor 1 isoform X2"/>
    <property type="match status" value="1"/>
</dbReference>
<dbReference type="FunFam" id="1.10.840.10:FF:000004">
    <property type="entry name" value="ras-specific guanine nucleotide-releasing factor 2 isoform X1"/>
    <property type="match status" value="1"/>
</dbReference>
<dbReference type="Gene3D" id="1.20.900.10">
    <property type="entry name" value="Dbl homology (DH) domain"/>
    <property type="match status" value="1"/>
</dbReference>
<dbReference type="Gene3D" id="2.30.29.30">
    <property type="entry name" value="Pleckstrin-homology domain (PH domain)/Phosphotyrosine-binding domain (PTB)"/>
    <property type="match status" value="2"/>
</dbReference>
<dbReference type="Gene3D" id="1.10.840.10">
    <property type="entry name" value="Ras guanine-nucleotide exchange factors catalytic domain"/>
    <property type="match status" value="1"/>
</dbReference>
<dbReference type="Gene3D" id="1.20.870.10">
    <property type="entry name" value="Son of sevenless (SoS) protein Chain: S domain 1"/>
    <property type="match status" value="2"/>
</dbReference>
<dbReference type="InterPro" id="IPR035899">
    <property type="entry name" value="DBL_dom_sf"/>
</dbReference>
<dbReference type="InterPro" id="IPR000219">
    <property type="entry name" value="DH_dom"/>
</dbReference>
<dbReference type="InterPro" id="IPR001331">
    <property type="entry name" value="GDS_CDC24_CS"/>
</dbReference>
<dbReference type="InterPro" id="IPR011993">
    <property type="entry name" value="PH-like_dom_sf"/>
</dbReference>
<dbReference type="InterPro" id="IPR001849">
    <property type="entry name" value="PH_domain"/>
</dbReference>
<dbReference type="InterPro" id="IPR008937">
    <property type="entry name" value="Ras-like_GEF"/>
</dbReference>
<dbReference type="InterPro" id="IPR000651">
    <property type="entry name" value="Ras-like_Gua-exchang_fac_N"/>
</dbReference>
<dbReference type="InterPro" id="IPR019804">
    <property type="entry name" value="Ras_G-nucl-exch_fac_CS"/>
</dbReference>
<dbReference type="InterPro" id="IPR023578">
    <property type="entry name" value="Ras_GEF_dom_sf"/>
</dbReference>
<dbReference type="InterPro" id="IPR001895">
    <property type="entry name" value="RASGEF_cat_dom"/>
</dbReference>
<dbReference type="InterPro" id="IPR036964">
    <property type="entry name" value="RASGEF_cat_dom_sf"/>
</dbReference>
<dbReference type="InterPro" id="IPR055251">
    <property type="entry name" value="SOS1_NGEF_PH"/>
</dbReference>
<dbReference type="PANTHER" id="PTHR23113">
    <property type="entry name" value="GUANINE NUCLEOTIDE EXCHANGE FACTOR"/>
    <property type="match status" value="1"/>
</dbReference>
<dbReference type="PANTHER" id="PTHR23113:SF193">
    <property type="entry name" value="RAS-SPECIFIC GUANINE NUCLEOTIDE-RELEASING FACTOR 1"/>
    <property type="match status" value="1"/>
</dbReference>
<dbReference type="Pfam" id="PF00169">
    <property type="entry name" value="PH"/>
    <property type="match status" value="1"/>
</dbReference>
<dbReference type="Pfam" id="PF00617">
    <property type="entry name" value="RasGEF"/>
    <property type="match status" value="1"/>
</dbReference>
<dbReference type="Pfam" id="PF00618">
    <property type="entry name" value="RasGEF_N"/>
    <property type="match status" value="1"/>
</dbReference>
<dbReference type="Pfam" id="PF00621">
    <property type="entry name" value="RhoGEF"/>
    <property type="match status" value="1"/>
</dbReference>
<dbReference type="Pfam" id="PF22697">
    <property type="entry name" value="SOS1_NGEF_PH"/>
    <property type="match status" value="1"/>
</dbReference>
<dbReference type="SMART" id="SM00233">
    <property type="entry name" value="PH"/>
    <property type="match status" value="2"/>
</dbReference>
<dbReference type="SMART" id="SM00147">
    <property type="entry name" value="RasGEF"/>
    <property type="match status" value="1"/>
</dbReference>
<dbReference type="SMART" id="SM00229">
    <property type="entry name" value="RasGEFN"/>
    <property type="match status" value="2"/>
</dbReference>
<dbReference type="SMART" id="SM00325">
    <property type="entry name" value="RhoGEF"/>
    <property type="match status" value="1"/>
</dbReference>
<dbReference type="SUPFAM" id="SSF48065">
    <property type="entry name" value="DBL homology domain (DH-domain)"/>
    <property type="match status" value="1"/>
</dbReference>
<dbReference type="SUPFAM" id="SSF50729">
    <property type="entry name" value="PH domain-like"/>
    <property type="match status" value="2"/>
</dbReference>
<dbReference type="SUPFAM" id="SSF48366">
    <property type="entry name" value="Ras GEF"/>
    <property type="match status" value="1"/>
</dbReference>
<dbReference type="PROSITE" id="PS00741">
    <property type="entry name" value="DH_1"/>
    <property type="match status" value="1"/>
</dbReference>
<dbReference type="PROSITE" id="PS50010">
    <property type="entry name" value="DH_2"/>
    <property type="match status" value="1"/>
</dbReference>
<dbReference type="PROSITE" id="PS50096">
    <property type="entry name" value="IQ"/>
    <property type="match status" value="1"/>
</dbReference>
<dbReference type="PROSITE" id="PS50003">
    <property type="entry name" value="PH_DOMAIN"/>
    <property type="match status" value="2"/>
</dbReference>
<dbReference type="PROSITE" id="PS00720">
    <property type="entry name" value="RASGEF"/>
    <property type="match status" value="1"/>
</dbReference>
<dbReference type="PROSITE" id="PS50009">
    <property type="entry name" value="RASGEF_CAT"/>
    <property type="match status" value="1"/>
</dbReference>
<dbReference type="PROSITE" id="PS50212">
    <property type="entry name" value="RASGEF_NTER"/>
    <property type="match status" value="1"/>
</dbReference>
<comment type="function">
    <text evidence="9">Promotes the exchange of Ras-bound GDP by GTP.</text>
</comment>
<comment type="subunit">
    <text evidence="1">Homooligomer and heterooligomer with RASGRF2. Interacts with USP8, thereby regulating its stability (By similarity).</text>
</comment>
<comment type="domain">
    <text evidence="1">The DH (DBL-homology) domain mediates interaction with RASGRF2.</text>
</comment>
<comment type="PTM">
    <text evidence="10">Phosphorylated by PLK2, leading to ubiquitination and degradation by the proteasome.</text>
</comment>
<comment type="PTM">
    <text evidence="10">Ubiquitinated and degraded following phosphorylation by PLK2.</text>
</comment>
<comment type="PTM">
    <text evidence="1">Phosphorylated by SRC and LCK. Phosphorylation by LCK increases its capacity to stimulate the GDP/GTP exchange on Ras, whereas its phosphorylation by SRC seems not to have an effect on stimulation activity (By similarity).</text>
</comment>
<evidence type="ECO:0000250" key="1"/>
<evidence type="ECO:0000250" key="2">
    <source>
        <dbReference type="UniProtKB" id="P27671"/>
    </source>
</evidence>
<evidence type="ECO:0000255" key="3">
    <source>
        <dbReference type="PROSITE-ProRule" id="PRU00062"/>
    </source>
</evidence>
<evidence type="ECO:0000255" key="4">
    <source>
        <dbReference type="PROSITE-ProRule" id="PRU00116"/>
    </source>
</evidence>
<evidence type="ECO:0000255" key="5">
    <source>
        <dbReference type="PROSITE-ProRule" id="PRU00135"/>
    </source>
</evidence>
<evidence type="ECO:0000255" key="6">
    <source>
        <dbReference type="PROSITE-ProRule" id="PRU00145"/>
    </source>
</evidence>
<evidence type="ECO:0000255" key="7">
    <source>
        <dbReference type="PROSITE-ProRule" id="PRU00168"/>
    </source>
</evidence>
<evidence type="ECO:0000256" key="8">
    <source>
        <dbReference type="SAM" id="MobiDB-lite"/>
    </source>
</evidence>
<evidence type="ECO:0000269" key="9">
    <source>
    </source>
</evidence>
<evidence type="ECO:0000269" key="10">
    <source>
    </source>
</evidence>
<organism>
    <name type="scientific">Rattus norvegicus</name>
    <name type="common">Rat</name>
    <dbReference type="NCBI Taxonomy" id="10116"/>
    <lineage>
        <taxon>Eukaryota</taxon>
        <taxon>Metazoa</taxon>
        <taxon>Chordata</taxon>
        <taxon>Craniata</taxon>
        <taxon>Vertebrata</taxon>
        <taxon>Euteleostomi</taxon>
        <taxon>Mammalia</taxon>
        <taxon>Eutheria</taxon>
        <taxon>Euarchontoglires</taxon>
        <taxon>Glires</taxon>
        <taxon>Rodentia</taxon>
        <taxon>Myomorpha</taxon>
        <taxon>Muroidea</taxon>
        <taxon>Muridae</taxon>
        <taxon>Murinae</taxon>
        <taxon>Rattus</taxon>
    </lineage>
</organism>
<gene>
    <name type="primary">Rasgrf1</name>
</gene>
<name>RGRF1_RAT</name>
<keyword id="KW-0344">Guanine-nucleotide releasing factor</keyword>
<keyword id="KW-0597">Phosphoprotein</keyword>
<keyword id="KW-1185">Reference proteome</keyword>
<keyword id="KW-0677">Repeat</keyword>
<keyword id="KW-0832">Ubl conjugation</keyword>